<gene>
    <name evidence="1" type="primary">rplE</name>
    <name type="ordered locus">Rsph17029_0373</name>
</gene>
<proteinExistence type="inferred from homology"/>
<accession>A3PGM3</accession>
<keyword id="KW-0687">Ribonucleoprotein</keyword>
<keyword id="KW-0689">Ribosomal protein</keyword>
<keyword id="KW-0694">RNA-binding</keyword>
<keyword id="KW-0699">rRNA-binding</keyword>
<keyword id="KW-0820">tRNA-binding</keyword>
<sequence length="186" mass="20906">MLDQTNYTPRLKAAYANTVRAAMKEEFGYKNDMQIPRLDKIVLNMGVGEAVKDTKKVKTAAEELSMIAGQKAVVTHAKKSIAGFRVREQMPLGCKVTLRGDRMYEFLDRLITIALPRVRDFRGVKGNSFDGRGNYAMGLKEQFVFPEINFDKVDEVLGMDIIICTTAKTDAEAKALLKQFNMPFIS</sequence>
<evidence type="ECO:0000255" key="1">
    <source>
        <dbReference type="HAMAP-Rule" id="MF_01333"/>
    </source>
</evidence>
<evidence type="ECO:0000305" key="2"/>
<dbReference type="EMBL" id="CP000577">
    <property type="protein sequence ID" value="ABN75489.1"/>
    <property type="molecule type" value="Genomic_DNA"/>
</dbReference>
<dbReference type="RefSeq" id="WP_011840323.1">
    <property type="nucleotide sequence ID" value="NC_009049.1"/>
</dbReference>
<dbReference type="SMR" id="A3PGM3"/>
<dbReference type="KEGG" id="rsh:Rsph17029_0373"/>
<dbReference type="HOGENOM" id="CLU_061015_2_1_5"/>
<dbReference type="GO" id="GO:1990904">
    <property type="term" value="C:ribonucleoprotein complex"/>
    <property type="evidence" value="ECO:0007669"/>
    <property type="project" value="UniProtKB-KW"/>
</dbReference>
<dbReference type="GO" id="GO:0005840">
    <property type="term" value="C:ribosome"/>
    <property type="evidence" value="ECO:0007669"/>
    <property type="project" value="UniProtKB-KW"/>
</dbReference>
<dbReference type="GO" id="GO:0019843">
    <property type="term" value="F:rRNA binding"/>
    <property type="evidence" value="ECO:0007669"/>
    <property type="project" value="UniProtKB-UniRule"/>
</dbReference>
<dbReference type="GO" id="GO:0003735">
    <property type="term" value="F:structural constituent of ribosome"/>
    <property type="evidence" value="ECO:0007669"/>
    <property type="project" value="InterPro"/>
</dbReference>
<dbReference type="GO" id="GO:0000049">
    <property type="term" value="F:tRNA binding"/>
    <property type="evidence" value="ECO:0007669"/>
    <property type="project" value="UniProtKB-UniRule"/>
</dbReference>
<dbReference type="GO" id="GO:0006412">
    <property type="term" value="P:translation"/>
    <property type="evidence" value="ECO:0007669"/>
    <property type="project" value="UniProtKB-UniRule"/>
</dbReference>
<dbReference type="FunFam" id="3.30.1440.10:FF:000001">
    <property type="entry name" value="50S ribosomal protein L5"/>
    <property type="match status" value="1"/>
</dbReference>
<dbReference type="Gene3D" id="3.30.1440.10">
    <property type="match status" value="1"/>
</dbReference>
<dbReference type="HAMAP" id="MF_01333_B">
    <property type="entry name" value="Ribosomal_uL5_B"/>
    <property type="match status" value="1"/>
</dbReference>
<dbReference type="InterPro" id="IPR002132">
    <property type="entry name" value="Ribosomal_uL5"/>
</dbReference>
<dbReference type="InterPro" id="IPR020930">
    <property type="entry name" value="Ribosomal_uL5_bac-type"/>
</dbReference>
<dbReference type="InterPro" id="IPR031309">
    <property type="entry name" value="Ribosomal_uL5_C"/>
</dbReference>
<dbReference type="InterPro" id="IPR020929">
    <property type="entry name" value="Ribosomal_uL5_CS"/>
</dbReference>
<dbReference type="InterPro" id="IPR022803">
    <property type="entry name" value="Ribosomal_uL5_dom_sf"/>
</dbReference>
<dbReference type="InterPro" id="IPR031310">
    <property type="entry name" value="Ribosomal_uL5_N"/>
</dbReference>
<dbReference type="NCBIfam" id="NF000585">
    <property type="entry name" value="PRK00010.1"/>
    <property type="match status" value="1"/>
</dbReference>
<dbReference type="PANTHER" id="PTHR11994">
    <property type="entry name" value="60S RIBOSOMAL PROTEIN L11-RELATED"/>
    <property type="match status" value="1"/>
</dbReference>
<dbReference type="Pfam" id="PF00281">
    <property type="entry name" value="Ribosomal_L5"/>
    <property type="match status" value="1"/>
</dbReference>
<dbReference type="Pfam" id="PF00673">
    <property type="entry name" value="Ribosomal_L5_C"/>
    <property type="match status" value="1"/>
</dbReference>
<dbReference type="PIRSF" id="PIRSF002161">
    <property type="entry name" value="Ribosomal_L5"/>
    <property type="match status" value="1"/>
</dbReference>
<dbReference type="SUPFAM" id="SSF55282">
    <property type="entry name" value="RL5-like"/>
    <property type="match status" value="1"/>
</dbReference>
<dbReference type="PROSITE" id="PS00358">
    <property type="entry name" value="RIBOSOMAL_L5"/>
    <property type="match status" value="1"/>
</dbReference>
<protein>
    <recommendedName>
        <fullName evidence="1">Large ribosomal subunit protein uL5</fullName>
    </recommendedName>
    <alternativeName>
        <fullName evidence="2">50S ribosomal protein L5</fullName>
    </alternativeName>
</protein>
<reference key="1">
    <citation type="submission" date="2007-02" db="EMBL/GenBank/DDBJ databases">
        <title>Complete sequence of chromosome 1 of Rhodobacter sphaeroides ATCC 17029.</title>
        <authorList>
            <person name="Copeland A."/>
            <person name="Lucas S."/>
            <person name="Lapidus A."/>
            <person name="Barry K."/>
            <person name="Detter J.C."/>
            <person name="Glavina del Rio T."/>
            <person name="Hammon N."/>
            <person name="Israni S."/>
            <person name="Dalin E."/>
            <person name="Tice H."/>
            <person name="Pitluck S."/>
            <person name="Kiss H."/>
            <person name="Brettin T."/>
            <person name="Bruce D."/>
            <person name="Han C."/>
            <person name="Tapia R."/>
            <person name="Gilna P."/>
            <person name="Schmutz J."/>
            <person name="Larimer F."/>
            <person name="Land M."/>
            <person name="Hauser L."/>
            <person name="Kyrpides N."/>
            <person name="Mikhailova N."/>
            <person name="Richardson P."/>
            <person name="Mackenzie C."/>
            <person name="Choudhary M."/>
            <person name="Donohue T.J."/>
            <person name="Kaplan S."/>
        </authorList>
    </citation>
    <scope>NUCLEOTIDE SEQUENCE [LARGE SCALE GENOMIC DNA]</scope>
    <source>
        <strain>ATCC 17029 / ATH 2.4.9</strain>
    </source>
</reference>
<organism>
    <name type="scientific">Cereibacter sphaeroides (strain ATCC 17029 / ATH 2.4.9)</name>
    <name type="common">Rhodobacter sphaeroides</name>
    <dbReference type="NCBI Taxonomy" id="349101"/>
    <lineage>
        <taxon>Bacteria</taxon>
        <taxon>Pseudomonadati</taxon>
        <taxon>Pseudomonadota</taxon>
        <taxon>Alphaproteobacteria</taxon>
        <taxon>Rhodobacterales</taxon>
        <taxon>Paracoccaceae</taxon>
        <taxon>Cereibacter</taxon>
    </lineage>
</organism>
<name>RL5_CERS1</name>
<feature type="chain" id="PRO_1000052810" description="Large ribosomal subunit protein uL5">
    <location>
        <begin position="1"/>
        <end position="186"/>
    </location>
</feature>
<comment type="function">
    <text evidence="1">This is one of the proteins that bind and probably mediate the attachment of the 5S RNA into the large ribosomal subunit, where it forms part of the central protuberance. In the 70S ribosome it contacts protein S13 of the 30S subunit (bridge B1b), connecting the 2 subunits; this bridge is implicated in subunit movement. Contacts the P site tRNA; the 5S rRNA and some of its associated proteins might help stabilize positioning of ribosome-bound tRNAs.</text>
</comment>
<comment type="subunit">
    <text evidence="1">Part of the 50S ribosomal subunit; part of the 5S rRNA/L5/L18/L25 subcomplex. Contacts the 5S rRNA and the P site tRNA. Forms a bridge to the 30S subunit in the 70S ribosome.</text>
</comment>
<comment type="similarity">
    <text evidence="1">Belongs to the universal ribosomal protein uL5 family.</text>
</comment>